<sequence>MFLDQITIELRAGKGGNGVVAWRKEKYLPKGGPYGGNGGVGGSIIIESATHVYSFESYRNIRFLKAEDGQSGATNNRSGRNGKDLVLVVPEGTLLRDVETREIIYDFAKDGERLVICRGGKGGKGNTFFKTSTNRAPTKATPGKPGEVRQVELELKLIADIGLVGFPNAGKSTLFNTLAKTEVKVGAYPFTTLQPVLGLVPCREKLYQKPWIIADIPGIIEGAHQNRGLGLDFLRHIERTRLLLFVVDICGCERSSPEEDLRILMDELLHYKEDLADKGRIIALNKIDDLLPDERQERLENFQRLFPSEQFVMLSGLTGEGVDLLNSLFTNRLSV</sequence>
<organism>
    <name type="scientific">Chlamydia caviae (strain ATCC VR-813 / DSM 19441 / 03DC25 / GPIC)</name>
    <name type="common">Chlamydophila caviae</name>
    <dbReference type="NCBI Taxonomy" id="227941"/>
    <lineage>
        <taxon>Bacteria</taxon>
        <taxon>Pseudomonadati</taxon>
        <taxon>Chlamydiota</taxon>
        <taxon>Chlamydiia</taxon>
        <taxon>Chlamydiales</taxon>
        <taxon>Chlamydiaceae</taxon>
        <taxon>Chlamydia/Chlamydophila group</taxon>
        <taxon>Chlamydia</taxon>
    </lineage>
</organism>
<name>OBG_CHLCV</name>
<feature type="chain" id="PRO_0000385820" description="GTPase Obg">
    <location>
        <begin position="1"/>
        <end position="335"/>
    </location>
</feature>
<feature type="domain" description="Obg" evidence="2">
    <location>
        <begin position="1"/>
        <end position="158"/>
    </location>
</feature>
<feature type="domain" description="OBG-type G" evidence="1">
    <location>
        <begin position="159"/>
        <end position="334"/>
    </location>
</feature>
<feature type="binding site" evidence="1">
    <location>
        <begin position="165"/>
        <end position="172"/>
    </location>
    <ligand>
        <name>GTP</name>
        <dbReference type="ChEBI" id="CHEBI:37565"/>
    </ligand>
</feature>
<feature type="binding site" evidence="1">
    <location>
        <position position="172"/>
    </location>
    <ligand>
        <name>Mg(2+)</name>
        <dbReference type="ChEBI" id="CHEBI:18420"/>
    </ligand>
</feature>
<feature type="binding site" evidence="1">
    <location>
        <begin position="190"/>
        <end position="194"/>
    </location>
    <ligand>
        <name>GTP</name>
        <dbReference type="ChEBI" id="CHEBI:37565"/>
    </ligand>
</feature>
<feature type="binding site" evidence="1">
    <location>
        <position position="192"/>
    </location>
    <ligand>
        <name>Mg(2+)</name>
        <dbReference type="ChEBI" id="CHEBI:18420"/>
    </ligand>
</feature>
<feature type="binding site" evidence="1">
    <location>
        <begin position="215"/>
        <end position="218"/>
    </location>
    <ligand>
        <name>GTP</name>
        <dbReference type="ChEBI" id="CHEBI:37565"/>
    </ligand>
</feature>
<feature type="binding site" evidence="1">
    <location>
        <begin position="285"/>
        <end position="288"/>
    </location>
    <ligand>
        <name>GTP</name>
        <dbReference type="ChEBI" id="CHEBI:37565"/>
    </ligand>
</feature>
<feature type="binding site" evidence="1">
    <location>
        <begin position="315"/>
        <end position="317"/>
    </location>
    <ligand>
        <name>GTP</name>
        <dbReference type="ChEBI" id="CHEBI:37565"/>
    </ligand>
</feature>
<protein>
    <recommendedName>
        <fullName evidence="1">GTPase Obg</fullName>
        <ecNumber evidence="1">3.6.5.-</ecNumber>
    </recommendedName>
    <alternativeName>
        <fullName evidence="1">GTP-binding protein Obg</fullName>
    </alternativeName>
</protein>
<accession>Q824F3</accession>
<reference key="1">
    <citation type="journal article" date="2003" name="Nucleic Acids Res.">
        <title>Genome sequence of Chlamydophila caviae (Chlamydia psittaci GPIC): examining the role of niche-specific genes in the evolution of the Chlamydiaceae.</title>
        <authorList>
            <person name="Read T.D."/>
            <person name="Myers G.S.A."/>
            <person name="Brunham R.C."/>
            <person name="Nelson W.C."/>
            <person name="Paulsen I.T."/>
            <person name="Heidelberg J.F."/>
            <person name="Holtzapple E.K."/>
            <person name="Khouri H.M."/>
            <person name="Federova N.B."/>
            <person name="Carty H.A."/>
            <person name="Umayam L.A."/>
            <person name="Haft D.H."/>
            <person name="Peterson J.D."/>
            <person name="Beanan M.J."/>
            <person name="White O."/>
            <person name="Salzberg S.L."/>
            <person name="Hsia R.-C."/>
            <person name="McClarty G."/>
            <person name="Rank R.G."/>
            <person name="Bavoil P.M."/>
            <person name="Fraser C.M."/>
        </authorList>
    </citation>
    <scope>NUCLEOTIDE SEQUENCE [LARGE SCALE GENOMIC DNA]</scope>
    <source>
        <strain>ATCC VR-813 / DSM 19441 / 03DC25 / GPIC</strain>
    </source>
</reference>
<proteinExistence type="inferred from homology"/>
<dbReference type="EC" id="3.6.5.-" evidence="1"/>
<dbReference type="EMBL" id="AE015925">
    <property type="protein sequence ID" value="AAP04950.1"/>
    <property type="molecule type" value="Genomic_DNA"/>
</dbReference>
<dbReference type="RefSeq" id="WP_011006169.1">
    <property type="nucleotide sequence ID" value="NC_003361.3"/>
</dbReference>
<dbReference type="SMR" id="Q824F3"/>
<dbReference type="STRING" id="227941.CCA_00199"/>
<dbReference type="KEGG" id="cca:CCA_00199"/>
<dbReference type="eggNOG" id="COG0536">
    <property type="taxonomic scope" value="Bacteria"/>
</dbReference>
<dbReference type="HOGENOM" id="CLU_011747_2_3_0"/>
<dbReference type="OrthoDB" id="9807318at2"/>
<dbReference type="Proteomes" id="UP000002193">
    <property type="component" value="Chromosome"/>
</dbReference>
<dbReference type="GO" id="GO:0005737">
    <property type="term" value="C:cytoplasm"/>
    <property type="evidence" value="ECO:0007669"/>
    <property type="project" value="UniProtKB-SubCell"/>
</dbReference>
<dbReference type="GO" id="GO:0005525">
    <property type="term" value="F:GTP binding"/>
    <property type="evidence" value="ECO:0007669"/>
    <property type="project" value="UniProtKB-UniRule"/>
</dbReference>
<dbReference type="GO" id="GO:0003924">
    <property type="term" value="F:GTPase activity"/>
    <property type="evidence" value="ECO:0007669"/>
    <property type="project" value="UniProtKB-UniRule"/>
</dbReference>
<dbReference type="GO" id="GO:0000287">
    <property type="term" value="F:magnesium ion binding"/>
    <property type="evidence" value="ECO:0007669"/>
    <property type="project" value="InterPro"/>
</dbReference>
<dbReference type="GO" id="GO:0042254">
    <property type="term" value="P:ribosome biogenesis"/>
    <property type="evidence" value="ECO:0007669"/>
    <property type="project" value="UniProtKB-UniRule"/>
</dbReference>
<dbReference type="CDD" id="cd01898">
    <property type="entry name" value="Obg"/>
    <property type="match status" value="1"/>
</dbReference>
<dbReference type="FunFam" id="2.70.210.12:FF:000001">
    <property type="entry name" value="GTPase Obg"/>
    <property type="match status" value="1"/>
</dbReference>
<dbReference type="Gene3D" id="2.70.210.12">
    <property type="entry name" value="GTP1/OBG domain"/>
    <property type="match status" value="1"/>
</dbReference>
<dbReference type="Gene3D" id="3.40.50.300">
    <property type="entry name" value="P-loop containing nucleotide triphosphate hydrolases"/>
    <property type="match status" value="1"/>
</dbReference>
<dbReference type="HAMAP" id="MF_01454">
    <property type="entry name" value="GTPase_Obg"/>
    <property type="match status" value="1"/>
</dbReference>
<dbReference type="InterPro" id="IPR031167">
    <property type="entry name" value="G_OBG"/>
</dbReference>
<dbReference type="InterPro" id="IPR006073">
    <property type="entry name" value="GTP-bd"/>
</dbReference>
<dbReference type="InterPro" id="IPR014100">
    <property type="entry name" value="GTP-bd_Obg/CgtA"/>
</dbReference>
<dbReference type="InterPro" id="IPR006169">
    <property type="entry name" value="GTP1_OBG_dom"/>
</dbReference>
<dbReference type="InterPro" id="IPR036726">
    <property type="entry name" value="GTP1_OBG_dom_sf"/>
</dbReference>
<dbReference type="InterPro" id="IPR045086">
    <property type="entry name" value="OBG_GTPase"/>
</dbReference>
<dbReference type="InterPro" id="IPR027417">
    <property type="entry name" value="P-loop_NTPase"/>
</dbReference>
<dbReference type="NCBIfam" id="TIGR02729">
    <property type="entry name" value="Obg_CgtA"/>
    <property type="match status" value="1"/>
</dbReference>
<dbReference type="NCBIfam" id="NF008955">
    <property type="entry name" value="PRK12297.1"/>
    <property type="match status" value="1"/>
</dbReference>
<dbReference type="NCBIfam" id="NF008956">
    <property type="entry name" value="PRK12299.1"/>
    <property type="match status" value="1"/>
</dbReference>
<dbReference type="PANTHER" id="PTHR11702">
    <property type="entry name" value="DEVELOPMENTALLY REGULATED GTP-BINDING PROTEIN-RELATED"/>
    <property type="match status" value="1"/>
</dbReference>
<dbReference type="PANTHER" id="PTHR11702:SF31">
    <property type="entry name" value="MITOCHONDRIAL RIBOSOME-ASSOCIATED GTPASE 2"/>
    <property type="match status" value="1"/>
</dbReference>
<dbReference type="Pfam" id="PF01018">
    <property type="entry name" value="GTP1_OBG"/>
    <property type="match status" value="1"/>
</dbReference>
<dbReference type="Pfam" id="PF01926">
    <property type="entry name" value="MMR_HSR1"/>
    <property type="match status" value="1"/>
</dbReference>
<dbReference type="PIRSF" id="PIRSF002401">
    <property type="entry name" value="GTP_bd_Obg/CgtA"/>
    <property type="match status" value="1"/>
</dbReference>
<dbReference type="PRINTS" id="PR00326">
    <property type="entry name" value="GTP1OBG"/>
</dbReference>
<dbReference type="SUPFAM" id="SSF82051">
    <property type="entry name" value="Obg GTP-binding protein N-terminal domain"/>
    <property type="match status" value="1"/>
</dbReference>
<dbReference type="SUPFAM" id="SSF52540">
    <property type="entry name" value="P-loop containing nucleoside triphosphate hydrolases"/>
    <property type="match status" value="1"/>
</dbReference>
<dbReference type="PROSITE" id="PS51710">
    <property type="entry name" value="G_OBG"/>
    <property type="match status" value="1"/>
</dbReference>
<dbReference type="PROSITE" id="PS51883">
    <property type="entry name" value="OBG"/>
    <property type="match status" value="1"/>
</dbReference>
<comment type="function">
    <text evidence="1">An essential GTPase which binds GTP, GDP and possibly (p)ppGpp with moderate affinity, with high nucleotide exchange rates and a fairly low GTP hydrolysis rate. Plays a role in control of the cell cycle, stress response, ribosome biogenesis and in those bacteria that undergo differentiation, in morphogenesis control.</text>
</comment>
<comment type="cofactor">
    <cofactor evidence="1">
        <name>Mg(2+)</name>
        <dbReference type="ChEBI" id="CHEBI:18420"/>
    </cofactor>
</comment>
<comment type="subunit">
    <text evidence="1">Monomer.</text>
</comment>
<comment type="subcellular location">
    <subcellularLocation>
        <location evidence="1">Cytoplasm</location>
    </subcellularLocation>
</comment>
<comment type="similarity">
    <text evidence="1">Belongs to the TRAFAC class OBG-HflX-like GTPase superfamily. OBG GTPase family.</text>
</comment>
<gene>
    <name evidence="1" type="primary">obg</name>
    <name type="ordered locus">CCA_00199</name>
</gene>
<keyword id="KW-0963">Cytoplasm</keyword>
<keyword id="KW-0342">GTP-binding</keyword>
<keyword id="KW-0378">Hydrolase</keyword>
<keyword id="KW-0460">Magnesium</keyword>
<keyword id="KW-0479">Metal-binding</keyword>
<keyword id="KW-0547">Nucleotide-binding</keyword>
<evidence type="ECO:0000255" key="1">
    <source>
        <dbReference type="HAMAP-Rule" id="MF_01454"/>
    </source>
</evidence>
<evidence type="ECO:0000255" key="2">
    <source>
        <dbReference type="PROSITE-ProRule" id="PRU01231"/>
    </source>
</evidence>